<sequence>MRLTSKGRYAVTAMLDVALNSEAGPVPLADISERQGISLSYLEQLFSRLRKNGLVSSVRGPGGGYLLGKDASSIAVGEVISAVDESVDATRCQGKGGCQGGDKCLTHALWRDLSDRLTGFLNNITLGELVNNQEVLDVSGRQHTHDAPRTRIQDAIDVKLRA</sequence>
<gene>
    <name evidence="1" type="primary">iscR</name>
    <name type="ordered locus">ECIAI1_2583</name>
</gene>
<dbReference type="EMBL" id="CU928160">
    <property type="protein sequence ID" value="CAQ99422.1"/>
    <property type="molecule type" value="Genomic_DNA"/>
</dbReference>
<dbReference type="RefSeq" id="WP_001241356.1">
    <property type="nucleotide sequence ID" value="NC_011741.1"/>
</dbReference>
<dbReference type="SMR" id="B7M7N4"/>
<dbReference type="GeneID" id="93774605"/>
<dbReference type="KEGG" id="ecr:ECIAI1_2583"/>
<dbReference type="HOGENOM" id="CLU_107144_0_0_6"/>
<dbReference type="GO" id="GO:0005829">
    <property type="term" value="C:cytosol"/>
    <property type="evidence" value="ECO:0007669"/>
    <property type="project" value="TreeGrafter"/>
</dbReference>
<dbReference type="GO" id="GO:0051537">
    <property type="term" value="F:2 iron, 2 sulfur cluster binding"/>
    <property type="evidence" value="ECO:0007669"/>
    <property type="project" value="UniProtKB-KW"/>
</dbReference>
<dbReference type="GO" id="GO:0003700">
    <property type="term" value="F:DNA-binding transcription factor activity"/>
    <property type="evidence" value="ECO:0007669"/>
    <property type="project" value="UniProtKB-UniRule"/>
</dbReference>
<dbReference type="GO" id="GO:0003690">
    <property type="term" value="F:double-stranded DNA binding"/>
    <property type="evidence" value="ECO:0007669"/>
    <property type="project" value="UniProtKB-UniRule"/>
</dbReference>
<dbReference type="GO" id="GO:0005506">
    <property type="term" value="F:iron ion binding"/>
    <property type="evidence" value="ECO:0007669"/>
    <property type="project" value="UniProtKB-UniRule"/>
</dbReference>
<dbReference type="FunFam" id="1.10.10.10:FF:000026">
    <property type="entry name" value="HTH-type transcriptional regulator IscR"/>
    <property type="match status" value="1"/>
</dbReference>
<dbReference type="Gene3D" id="1.10.10.10">
    <property type="entry name" value="Winged helix-like DNA-binding domain superfamily/Winged helix DNA-binding domain"/>
    <property type="match status" value="1"/>
</dbReference>
<dbReference type="HAMAP" id="MF_01176">
    <property type="entry name" value="HTH_type_IscR"/>
    <property type="match status" value="1"/>
</dbReference>
<dbReference type="InterPro" id="IPR010242">
    <property type="entry name" value="TF_HTH_IscR"/>
</dbReference>
<dbReference type="InterPro" id="IPR030489">
    <property type="entry name" value="TR_Rrf2-type_CS"/>
</dbReference>
<dbReference type="InterPro" id="IPR000944">
    <property type="entry name" value="Tscrpt_reg_Rrf2"/>
</dbReference>
<dbReference type="InterPro" id="IPR036388">
    <property type="entry name" value="WH-like_DNA-bd_sf"/>
</dbReference>
<dbReference type="InterPro" id="IPR036390">
    <property type="entry name" value="WH_DNA-bd_sf"/>
</dbReference>
<dbReference type="NCBIfam" id="TIGR02010">
    <property type="entry name" value="IscR"/>
    <property type="match status" value="1"/>
</dbReference>
<dbReference type="NCBIfam" id="NF008110">
    <property type="entry name" value="PRK10857.1"/>
    <property type="match status" value="1"/>
</dbReference>
<dbReference type="NCBIfam" id="TIGR00738">
    <property type="entry name" value="rrf2_super"/>
    <property type="match status" value="1"/>
</dbReference>
<dbReference type="PANTHER" id="PTHR33221:SF5">
    <property type="entry name" value="HTH-TYPE TRANSCRIPTIONAL REGULATOR ISCR"/>
    <property type="match status" value="1"/>
</dbReference>
<dbReference type="PANTHER" id="PTHR33221">
    <property type="entry name" value="WINGED HELIX-TURN-HELIX TRANSCRIPTIONAL REGULATOR, RRF2 FAMILY"/>
    <property type="match status" value="1"/>
</dbReference>
<dbReference type="Pfam" id="PF02082">
    <property type="entry name" value="Rrf2"/>
    <property type="match status" value="1"/>
</dbReference>
<dbReference type="SUPFAM" id="SSF46785">
    <property type="entry name" value="Winged helix' DNA-binding domain"/>
    <property type="match status" value="1"/>
</dbReference>
<dbReference type="PROSITE" id="PS01332">
    <property type="entry name" value="HTH_RRF2_1"/>
    <property type="match status" value="1"/>
</dbReference>
<dbReference type="PROSITE" id="PS51197">
    <property type="entry name" value="HTH_RRF2_2"/>
    <property type="match status" value="1"/>
</dbReference>
<proteinExistence type="inferred from homology"/>
<accession>B7M7N4</accession>
<reference key="1">
    <citation type="journal article" date="2009" name="PLoS Genet.">
        <title>Organised genome dynamics in the Escherichia coli species results in highly diverse adaptive paths.</title>
        <authorList>
            <person name="Touchon M."/>
            <person name="Hoede C."/>
            <person name="Tenaillon O."/>
            <person name="Barbe V."/>
            <person name="Baeriswyl S."/>
            <person name="Bidet P."/>
            <person name="Bingen E."/>
            <person name="Bonacorsi S."/>
            <person name="Bouchier C."/>
            <person name="Bouvet O."/>
            <person name="Calteau A."/>
            <person name="Chiapello H."/>
            <person name="Clermont O."/>
            <person name="Cruveiller S."/>
            <person name="Danchin A."/>
            <person name="Diard M."/>
            <person name="Dossat C."/>
            <person name="Karoui M.E."/>
            <person name="Frapy E."/>
            <person name="Garry L."/>
            <person name="Ghigo J.M."/>
            <person name="Gilles A.M."/>
            <person name="Johnson J."/>
            <person name="Le Bouguenec C."/>
            <person name="Lescat M."/>
            <person name="Mangenot S."/>
            <person name="Martinez-Jehanne V."/>
            <person name="Matic I."/>
            <person name="Nassif X."/>
            <person name="Oztas S."/>
            <person name="Petit M.A."/>
            <person name="Pichon C."/>
            <person name="Rouy Z."/>
            <person name="Ruf C.S."/>
            <person name="Schneider D."/>
            <person name="Tourret J."/>
            <person name="Vacherie B."/>
            <person name="Vallenet D."/>
            <person name="Medigue C."/>
            <person name="Rocha E.P.C."/>
            <person name="Denamur E."/>
        </authorList>
    </citation>
    <scope>NUCLEOTIDE SEQUENCE [LARGE SCALE GENOMIC DNA]</scope>
    <source>
        <strain>IAI1</strain>
    </source>
</reference>
<feature type="chain" id="PRO_1000138096" description="HTH-type transcriptional regulator IscR">
    <location>
        <begin position="1"/>
        <end position="162"/>
    </location>
</feature>
<feature type="domain" description="HTH rrf2-type" evidence="1">
    <location>
        <begin position="2"/>
        <end position="131"/>
    </location>
</feature>
<feature type="DNA-binding region" description="H-T-H motif" evidence="1">
    <location>
        <begin position="28"/>
        <end position="51"/>
    </location>
</feature>
<feature type="binding site" evidence="1">
    <location>
        <position position="92"/>
    </location>
    <ligand>
        <name>[2Fe-2S] cluster</name>
        <dbReference type="ChEBI" id="CHEBI:190135"/>
    </ligand>
</feature>
<feature type="binding site" evidence="1">
    <location>
        <position position="98"/>
    </location>
    <ligand>
        <name>[2Fe-2S] cluster</name>
        <dbReference type="ChEBI" id="CHEBI:190135"/>
    </ligand>
</feature>
<feature type="binding site" evidence="1">
    <location>
        <position position="104"/>
    </location>
    <ligand>
        <name>[2Fe-2S] cluster</name>
        <dbReference type="ChEBI" id="CHEBI:190135"/>
    </ligand>
</feature>
<keyword id="KW-0001">2Fe-2S</keyword>
<keyword id="KW-0010">Activator</keyword>
<keyword id="KW-0238">DNA-binding</keyword>
<keyword id="KW-0408">Iron</keyword>
<keyword id="KW-0411">Iron-sulfur</keyword>
<keyword id="KW-0479">Metal-binding</keyword>
<keyword id="KW-0678">Repressor</keyword>
<keyword id="KW-0804">Transcription</keyword>
<keyword id="KW-0805">Transcription regulation</keyword>
<name>ISCR_ECO8A</name>
<comment type="function">
    <text evidence="1">Regulates the transcription of several operons and genes involved in the biogenesis of Fe-S clusters and Fe-S-containing proteins.</text>
</comment>
<comment type="cofactor">
    <cofactor evidence="1">
        <name>[2Fe-2S] cluster</name>
        <dbReference type="ChEBI" id="CHEBI:190135"/>
    </cofactor>
    <text evidence="1">Binds 1 [2Fe-2S] cluster.</text>
</comment>
<evidence type="ECO:0000255" key="1">
    <source>
        <dbReference type="HAMAP-Rule" id="MF_01176"/>
    </source>
</evidence>
<protein>
    <recommendedName>
        <fullName evidence="1">HTH-type transcriptional regulator IscR</fullName>
    </recommendedName>
</protein>
<organism>
    <name type="scientific">Escherichia coli O8 (strain IAI1)</name>
    <dbReference type="NCBI Taxonomy" id="585034"/>
    <lineage>
        <taxon>Bacteria</taxon>
        <taxon>Pseudomonadati</taxon>
        <taxon>Pseudomonadota</taxon>
        <taxon>Gammaproteobacteria</taxon>
        <taxon>Enterobacterales</taxon>
        <taxon>Enterobacteriaceae</taxon>
        <taxon>Escherichia</taxon>
    </lineage>
</organism>